<sequence length="86" mass="8898">MAQKKGGGSTRNGRDSESKRLGVKVFGGQAINAGGIIIRQRGTRVHAGDNVGVGKDHTLFALVDGHVQFAVKGPAKKQHVSVVPAA</sequence>
<proteinExistence type="inferred from homology"/>
<name>RL27_CUPPJ</name>
<organism>
    <name type="scientific">Cupriavidus pinatubonensis (strain JMP 134 / LMG 1197)</name>
    <name type="common">Cupriavidus necator (strain JMP 134)</name>
    <dbReference type="NCBI Taxonomy" id="264198"/>
    <lineage>
        <taxon>Bacteria</taxon>
        <taxon>Pseudomonadati</taxon>
        <taxon>Pseudomonadota</taxon>
        <taxon>Betaproteobacteria</taxon>
        <taxon>Burkholderiales</taxon>
        <taxon>Burkholderiaceae</taxon>
        <taxon>Cupriavidus</taxon>
    </lineage>
</organism>
<accession>Q46X16</accession>
<protein>
    <recommendedName>
        <fullName evidence="1">Large ribosomal subunit protein bL27</fullName>
    </recommendedName>
    <alternativeName>
        <fullName evidence="3">50S ribosomal protein L27</fullName>
    </alternativeName>
</protein>
<feature type="chain" id="PRO_1000017571" description="Large ribosomal subunit protein bL27">
    <location>
        <begin position="1"/>
        <end position="86"/>
    </location>
</feature>
<feature type="region of interest" description="Disordered" evidence="2">
    <location>
        <begin position="1"/>
        <end position="21"/>
    </location>
</feature>
<feature type="compositionally biased region" description="Gly residues" evidence="2">
    <location>
        <begin position="1"/>
        <end position="10"/>
    </location>
</feature>
<evidence type="ECO:0000255" key="1">
    <source>
        <dbReference type="HAMAP-Rule" id="MF_00539"/>
    </source>
</evidence>
<evidence type="ECO:0000256" key="2">
    <source>
        <dbReference type="SAM" id="MobiDB-lite"/>
    </source>
</evidence>
<evidence type="ECO:0000305" key="3"/>
<comment type="similarity">
    <text evidence="1">Belongs to the bacterial ribosomal protein bL27 family.</text>
</comment>
<gene>
    <name evidence="1" type="primary">rpmA</name>
    <name type="ordered locus">Reut_A2957</name>
</gene>
<reference key="1">
    <citation type="journal article" date="2010" name="PLoS ONE">
        <title>The complete multipartite genome sequence of Cupriavidus necator JMP134, a versatile pollutant degrader.</title>
        <authorList>
            <person name="Lykidis A."/>
            <person name="Perez-Pantoja D."/>
            <person name="Ledger T."/>
            <person name="Mavromatis K."/>
            <person name="Anderson I.J."/>
            <person name="Ivanova N.N."/>
            <person name="Hooper S.D."/>
            <person name="Lapidus A."/>
            <person name="Lucas S."/>
            <person name="Gonzalez B."/>
            <person name="Kyrpides N.C."/>
        </authorList>
    </citation>
    <scope>NUCLEOTIDE SEQUENCE [LARGE SCALE GENOMIC DNA]</scope>
    <source>
        <strain>JMP134 / LMG 1197</strain>
    </source>
</reference>
<dbReference type="EMBL" id="CP000090">
    <property type="protein sequence ID" value="AAZ62317.1"/>
    <property type="molecule type" value="Genomic_DNA"/>
</dbReference>
<dbReference type="SMR" id="Q46X16"/>
<dbReference type="STRING" id="264198.Reut_A2957"/>
<dbReference type="KEGG" id="reu:Reut_A2957"/>
<dbReference type="eggNOG" id="COG0211">
    <property type="taxonomic scope" value="Bacteria"/>
</dbReference>
<dbReference type="HOGENOM" id="CLU_095424_4_1_4"/>
<dbReference type="OrthoDB" id="9803474at2"/>
<dbReference type="GO" id="GO:0022625">
    <property type="term" value="C:cytosolic large ribosomal subunit"/>
    <property type="evidence" value="ECO:0007669"/>
    <property type="project" value="TreeGrafter"/>
</dbReference>
<dbReference type="GO" id="GO:0003735">
    <property type="term" value="F:structural constituent of ribosome"/>
    <property type="evidence" value="ECO:0007669"/>
    <property type="project" value="InterPro"/>
</dbReference>
<dbReference type="GO" id="GO:0006412">
    <property type="term" value="P:translation"/>
    <property type="evidence" value="ECO:0007669"/>
    <property type="project" value="UniProtKB-UniRule"/>
</dbReference>
<dbReference type="FunFam" id="2.40.50.100:FF:000001">
    <property type="entry name" value="50S ribosomal protein L27"/>
    <property type="match status" value="1"/>
</dbReference>
<dbReference type="Gene3D" id="2.40.50.100">
    <property type="match status" value="1"/>
</dbReference>
<dbReference type="HAMAP" id="MF_00539">
    <property type="entry name" value="Ribosomal_bL27"/>
    <property type="match status" value="1"/>
</dbReference>
<dbReference type="InterPro" id="IPR001684">
    <property type="entry name" value="Ribosomal_bL27"/>
</dbReference>
<dbReference type="InterPro" id="IPR018261">
    <property type="entry name" value="Ribosomal_bL27_CS"/>
</dbReference>
<dbReference type="NCBIfam" id="TIGR00062">
    <property type="entry name" value="L27"/>
    <property type="match status" value="1"/>
</dbReference>
<dbReference type="PANTHER" id="PTHR15893:SF0">
    <property type="entry name" value="LARGE RIBOSOMAL SUBUNIT PROTEIN BL27M"/>
    <property type="match status" value="1"/>
</dbReference>
<dbReference type="PANTHER" id="PTHR15893">
    <property type="entry name" value="RIBOSOMAL PROTEIN L27"/>
    <property type="match status" value="1"/>
</dbReference>
<dbReference type="Pfam" id="PF01016">
    <property type="entry name" value="Ribosomal_L27"/>
    <property type="match status" value="1"/>
</dbReference>
<dbReference type="PRINTS" id="PR00063">
    <property type="entry name" value="RIBOSOMALL27"/>
</dbReference>
<dbReference type="SUPFAM" id="SSF110324">
    <property type="entry name" value="Ribosomal L27 protein-like"/>
    <property type="match status" value="1"/>
</dbReference>
<dbReference type="PROSITE" id="PS00831">
    <property type="entry name" value="RIBOSOMAL_L27"/>
    <property type="match status" value="1"/>
</dbReference>
<keyword id="KW-0687">Ribonucleoprotein</keyword>
<keyword id="KW-0689">Ribosomal protein</keyword>